<organism>
    <name type="scientific">Shewanella denitrificans (strain OS217 / ATCC BAA-1090 / DSM 15013)</name>
    <dbReference type="NCBI Taxonomy" id="318161"/>
    <lineage>
        <taxon>Bacteria</taxon>
        <taxon>Pseudomonadati</taxon>
        <taxon>Pseudomonadota</taxon>
        <taxon>Gammaproteobacteria</taxon>
        <taxon>Alteromonadales</taxon>
        <taxon>Shewanellaceae</taxon>
        <taxon>Shewanella</taxon>
    </lineage>
</organism>
<proteinExistence type="inferred from homology"/>
<reference key="1">
    <citation type="submission" date="2006-03" db="EMBL/GenBank/DDBJ databases">
        <title>Complete sequence of Shewanella denitrificans OS217.</title>
        <authorList>
            <consortium name="US DOE Joint Genome Institute"/>
            <person name="Copeland A."/>
            <person name="Lucas S."/>
            <person name="Lapidus A."/>
            <person name="Barry K."/>
            <person name="Detter J.C."/>
            <person name="Glavina del Rio T."/>
            <person name="Hammon N."/>
            <person name="Israni S."/>
            <person name="Dalin E."/>
            <person name="Tice H."/>
            <person name="Pitluck S."/>
            <person name="Brettin T."/>
            <person name="Bruce D."/>
            <person name="Han C."/>
            <person name="Tapia R."/>
            <person name="Gilna P."/>
            <person name="Kiss H."/>
            <person name="Schmutz J."/>
            <person name="Larimer F."/>
            <person name="Land M."/>
            <person name="Hauser L."/>
            <person name="Kyrpides N."/>
            <person name="Lykidis A."/>
            <person name="Richardson P."/>
        </authorList>
    </citation>
    <scope>NUCLEOTIDE SEQUENCE [LARGE SCALE GENOMIC DNA]</scope>
    <source>
        <strain>OS217 / ATCC BAA-1090 / DSM 15013</strain>
    </source>
</reference>
<name>HIS6_SHEDO</name>
<accession>Q12NT0</accession>
<evidence type="ECO:0000255" key="1">
    <source>
        <dbReference type="HAMAP-Rule" id="MF_01013"/>
    </source>
</evidence>
<keyword id="KW-0028">Amino-acid biosynthesis</keyword>
<keyword id="KW-0963">Cytoplasm</keyword>
<keyword id="KW-0368">Histidine biosynthesis</keyword>
<keyword id="KW-0456">Lyase</keyword>
<keyword id="KW-1185">Reference proteome</keyword>
<gene>
    <name evidence="1" type="primary">hisF</name>
    <name type="ordered locus">Sden_1612</name>
</gene>
<feature type="chain" id="PRO_1000063144" description="Imidazole glycerol phosphate synthase subunit HisF">
    <location>
        <begin position="1"/>
        <end position="257"/>
    </location>
</feature>
<feature type="active site" evidence="1">
    <location>
        <position position="11"/>
    </location>
</feature>
<feature type="active site" evidence="1">
    <location>
        <position position="130"/>
    </location>
</feature>
<dbReference type="EC" id="4.3.2.10" evidence="1"/>
<dbReference type="EMBL" id="CP000302">
    <property type="protein sequence ID" value="ABE54896.1"/>
    <property type="molecule type" value="Genomic_DNA"/>
</dbReference>
<dbReference type="RefSeq" id="WP_011496054.1">
    <property type="nucleotide sequence ID" value="NC_007954.1"/>
</dbReference>
<dbReference type="SMR" id="Q12NT0"/>
<dbReference type="STRING" id="318161.Sden_1612"/>
<dbReference type="KEGG" id="sdn:Sden_1612"/>
<dbReference type="eggNOG" id="COG0107">
    <property type="taxonomic scope" value="Bacteria"/>
</dbReference>
<dbReference type="HOGENOM" id="CLU_048577_4_0_6"/>
<dbReference type="OrthoDB" id="9781903at2"/>
<dbReference type="UniPathway" id="UPA00031">
    <property type="reaction ID" value="UER00010"/>
</dbReference>
<dbReference type="Proteomes" id="UP000001982">
    <property type="component" value="Chromosome"/>
</dbReference>
<dbReference type="GO" id="GO:0005737">
    <property type="term" value="C:cytoplasm"/>
    <property type="evidence" value="ECO:0007669"/>
    <property type="project" value="UniProtKB-SubCell"/>
</dbReference>
<dbReference type="GO" id="GO:0000107">
    <property type="term" value="F:imidazoleglycerol-phosphate synthase activity"/>
    <property type="evidence" value="ECO:0007669"/>
    <property type="project" value="UniProtKB-UniRule"/>
</dbReference>
<dbReference type="GO" id="GO:0016829">
    <property type="term" value="F:lyase activity"/>
    <property type="evidence" value="ECO:0007669"/>
    <property type="project" value="UniProtKB-KW"/>
</dbReference>
<dbReference type="GO" id="GO:0000105">
    <property type="term" value="P:L-histidine biosynthetic process"/>
    <property type="evidence" value="ECO:0007669"/>
    <property type="project" value="UniProtKB-UniRule"/>
</dbReference>
<dbReference type="CDD" id="cd04731">
    <property type="entry name" value="HisF"/>
    <property type="match status" value="1"/>
</dbReference>
<dbReference type="FunFam" id="3.20.20.70:FF:000006">
    <property type="entry name" value="Imidazole glycerol phosphate synthase subunit HisF"/>
    <property type="match status" value="1"/>
</dbReference>
<dbReference type="Gene3D" id="3.20.20.70">
    <property type="entry name" value="Aldolase class I"/>
    <property type="match status" value="1"/>
</dbReference>
<dbReference type="HAMAP" id="MF_01013">
    <property type="entry name" value="HisF"/>
    <property type="match status" value="1"/>
</dbReference>
<dbReference type="InterPro" id="IPR013785">
    <property type="entry name" value="Aldolase_TIM"/>
</dbReference>
<dbReference type="InterPro" id="IPR006062">
    <property type="entry name" value="His_biosynth"/>
</dbReference>
<dbReference type="InterPro" id="IPR004651">
    <property type="entry name" value="HisF"/>
</dbReference>
<dbReference type="InterPro" id="IPR050064">
    <property type="entry name" value="IGPS_HisA/HisF"/>
</dbReference>
<dbReference type="InterPro" id="IPR011060">
    <property type="entry name" value="RibuloseP-bd_barrel"/>
</dbReference>
<dbReference type="NCBIfam" id="TIGR00735">
    <property type="entry name" value="hisF"/>
    <property type="match status" value="1"/>
</dbReference>
<dbReference type="PANTHER" id="PTHR21235:SF2">
    <property type="entry name" value="IMIDAZOLE GLYCEROL PHOSPHATE SYNTHASE HISHF"/>
    <property type="match status" value="1"/>
</dbReference>
<dbReference type="PANTHER" id="PTHR21235">
    <property type="entry name" value="IMIDAZOLE GLYCEROL PHOSPHATE SYNTHASE SUBUNIT HISF/H IGP SYNTHASE SUBUNIT HISF/H"/>
    <property type="match status" value="1"/>
</dbReference>
<dbReference type="Pfam" id="PF00977">
    <property type="entry name" value="His_biosynth"/>
    <property type="match status" value="1"/>
</dbReference>
<dbReference type="SUPFAM" id="SSF51366">
    <property type="entry name" value="Ribulose-phoshate binding barrel"/>
    <property type="match status" value="1"/>
</dbReference>
<sequence length="257" mass="28017">MLAKRIVPCLDVKDGKVVKGVQFRNHAIVGDIVPLAARYAIEGADELVFYDISASAHGKVIDKSWVSRVAEQIDIPFCVAGGIKTLAQAREKLAFGADKISINSPALTDPDLISRLQDEFGRQCIVIGIDSFFDAASNSYKVKQFTGDEAATKDTQWYTQDWVEEVQKRGCGEIVLNVMNQDGVRGGYDIKQLSMVRSICDVPLIASGGAGTMAHFKDVFEQAKVDAALAASVFHKGIIDIGELKQYLHANNIAIRL</sequence>
<protein>
    <recommendedName>
        <fullName evidence="1">Imidazole glycerol phosphate synthase subunit HisF</fullName>
        <ecNumber evidence="1">4.3.2.10</ecNumber>
    </recommendedName>
    <alternativeName>
        <fullName evidence="1">IGP synthase cyclase subunit</fullName>
    </alternativeName>
    <alternativeName>
        <fullName evidence="1">IGP synthase subunit HisF</fullName>
    </alternativeName>
    <alternativeName>
        <fullName evidence="1">ImGP synthase subunit HisF</fullName>
        <shortName evidence="1">IGPS subunit HisF</shortName>
    </alternativeName>
</protein>
<comment type="function">
    <text evidence="1">IGPS catalyzes the conversion of PRFAR and glutamine to IGP, AICAR and glutamate. The HisF subunit catalyzes the cyclization activity that produces IGP and AICAR from PRFAR using the ammonia provided by the HisH subunit.</text>
</comment>
<comment type="catalytic activity">
    <reaction evidence="1">
        <text>5-[(5-phospho-1-deoxy-D-ribulos-1-ylimino)methylamino]-1-(5-phospho-beta-D-ribosyl)imidazole-4-carboxamide + L-glutamine = D-erythro-1-(imidazol-4-yl)glycerol 3-phosphate + 5-amino-1-(5-phospho-beta-D-ribosyl)imidazole-4-carboxamide + L-glutamate + H(+)</text>
        <dbReference type="Rhea" id="RHEA:24793"/>
        <dbReference type="ChEBI" id="CHEBI:15378"/>
        <dbReference type="ChEBI" id="CHEBI:29985"/>
        <dbReference type="ChEBI" id="CHEBI:58278"/>
        <dbReference type="ChEBI" id="CHEBI:58359"/>
        <dbReference type="ChEBI" id="CHEBI:58475"/>
        <dbReference type="ChEBI" id="CHEBI:58525"/>
        <dbReference type="EC" id="4.3.2.10"/>
    </reaction>
</comment>
<comment type="pathway">
    <text evidence="1">Amino-acid biosynthesis; L-histidine biosynthesis; L-histidine from 5-phospho-alpha-D-ribose 1-diphosphate: step 5/9.</text>
</comment>
<comment type="subunit">
    <text evidence="1">Heterodimer of HisH and HisF.</text>
</comment>
<comment type="subcellular location">
    <subcellularLocation>
        <location evidence="1">Cytoplasm</location>
    </subcellularLocation>
</comment>
<comment type="similarity">
    <text evidence="1">Belongs to the HisA/HisF family.</text>
</comment>